<accession>P13541</accession>
<accession>Q3V183</accession>
<accession>Q5SUD4</accession>
<sequence>MSSDTEMEVFGIAAPFLRKSEKERIEAQNQPFDAKTYCFVVDSKEEYVKGKIKSSQDGKVTVETEDSRTLVVKPEDVYAMNPPKFDKIEDMAMLTHLNEPAVLYNLKDRYTSWMIYTYSGLFCVTVNPYKWLPVYNPEVVDGYRGKKRQEAPPHIFSISDNAYQFMLTDRENQSILITGESGAGKTVNTKRVIQYFATIAATGDLAKKKDSKMKGTLEDQIISANPLLEAFGNAKTVRNDNSSRFGKFIRIHFGTTGKLASADIETYLLEKSRVTFQLKAERSYHIFYQILSNKKPELIELLLITTNPYDYPFISQGEILVASIDDAEELLATDSAIDILGFTPEEKSGLYKLTGAVMHYGNMKFKQKQREEQAEPDGTEVADKTAYLMGLNSSDLLKALCFPRVKVGNEYVTKGQTVDQVHHAVNALSKSVYEKLFLWMVTRINQQLDTKLPRQHFIGVLDIAGFEIFEYNSLEQLCINFTNEKLQQFFNHHMFVLEQEEYKKEGIEWTFIDFGMDLAACIELIEKPMGIFSILEEECMFPKATDTSFKNKLYDQHLGKSNNFQKPKVVKGKAEAHFSLVHYAGTVDYSVSGWLEKNKDPLNETVVGLYQKSSNRLLAHLYATFATTDADGGKKKVAKKKGSSFQTVSALFRENLNKLMSNLRTTHPHFVRCIIPNETKTPGAMEHSLVLHQLRCNGVLEGIRICRKGFPNRILYGDFKQRYRVLNASAIPEGQFIDSKKACEKLLASIDIDHTQYKFGHTKVFFKAGLLGTLEEMRDERLAKLITRTQAVCRGFLMRVEFQKMMQRRESIFCIQYNIRAFMNVKHWPWMKLFFKIKPLLKSAETEKEMATMKEEFQKTKDELAKSEAKRKELEEKLVTLVQEKNDLQLQVQAESENLLDAEERCDQLIKAKFQLEAKIKEVTERAEDEEEINAELTAKKRKLEDECSELKKDIDDLELTLAKVEKEKHATENKVKNLTEELAGLDETIAKLTREKKALQEAHQQTLDDLQAEEDKVNSLSKLKSKLEQQVDDLESSLEQEKKLRVDLERNKRKLEGDLKLAQESILDLENDKQQLDERLKKKDFEYSQLQSKVEDEQTLSLQLQKKIKELQARIEELEEEIEAERATRAKTEKQRSDYARELEELSERLEEAGGVTSTQIELNKKREAEFLKLRRDLEEATLQHEATVATLRKKHADSAAELAEQIDNLQRVKQKLEKEKSEFKLEIDDLSSSVESVSKSKANLEKICRTLEDQLSEARGKNEEMQRSLSELTTQKSRLQTEAGELSRQLEEKESIVSQLSRSKQAFTQQIEELKRQLEEENKAKNALAHALQSSRHDCDLLREQYEEEQEGKAELQRALSKANSEVAQWRTKYETDAIQRTEELEEAKKKLAQRLQDSEEQVEAVNAKCASLEKTKQRLQGEVEDLMVDVERANSLAAALDKKQRNFDKVLAEWKTKCEESQAELEAALKESRSLSTELFKLKNAYEEALDQLETVKRENKNLEQEIADLTEQIAENGKSIHELEKSRKQMELEKADIQMALEEAEAALEHEEAKILRIQLELTQVKSEIDRKIAEKDEEIEQLKRNYQRTVETMQGALDAEVRSRNEAIRLKKKMEGDLNEIEIQLSHANRQAAETIKHLRSVQGQLKDTQLHLDDALRGQEDLKEQLAIVERRANLLQAEVEELRATLEQTERARKLAEQELLDSNERVQLLHTQNTSLIHTKKKLETDLTQLQSEVEDACRDARNAEEKAKKAITDAAMMAEELKKEQDTSAHLERMKKNLEQTVKDLQHRLDEAEQLALKGGKKQIQKLETRIRELEFELEGEQKRNTESVKGLRKYERRVKELTYQSEEDRKNVLRLQDLVDKLQVKVKSYKRQAEEADEQANAHLTKFRKAQHELEEAEERADIAESQVNKLRAKTRDFTSSRMVVHESEE</sequence>
<comment type="function">
    <text>Muscle contraction.</text>
</comment>
<comment type="subunit">
    <text>Muscle myosin is a hexameric protein that consists of 2 heavy chain subunits (MHC), 2 alkali light chain subunits (MLC) and 2 regulatory light chain subunits (MLC-2).</text>
</comment>
<comment type="subcellular location">
    <subcellularLocation>
        <location>Cytoplasm</location>
        <location>Myofibril</location>
    </subcellularLocation>
    <text>Thick filaments of the myofibrils.</text>
</comment>
<comment type="domain">
    <text>The rodlike tail sequence is highly repetitive, showing cycles of a 28-residue repeat pattern composed of 4 heptapeptides, characteristic for alpha-helical coiled coils.</text>
</comment>
<comment type="domain">
    <text evidence="7">Limited proteolysis of myosin heavy chain produces 1 light meromyosin (LMM) and 1 heavy meromyosin (HMM). HMM can be further cleaved into 2 globular subfragments (S1) and 1 rod-shaped subfragment (S2).</text>
</comment>
<comment type="similarity">
    <text evidence="7">Belongs to the TRAFAC class myosin-kinesin ATPase superfamily. Myosin family.</text>
</comment>
<comment type="caution">
    <text evidence="7">Represents a conventional myosin. This protein should not be confused with the unconventional myosin-3 (MYO3).</text>
</comment>
<dbReference type="EMBL" id="AL596129">
    <property type="status" value="NOT_ANNOTATED_CDS"/>
    <property type="molecule type" value="Genomic_DNA"/>
</dbReference>
<dbReference type="EMBL" id="AL645988">
    <property type="status" value="NOT_ANNOTATED_CDS"/>
    <property type="molecule type" value="Genomic_DNA"/>
</dbReference>
<dbReference type="EMBL" id="AK132623">
    <property type="protein sequence ID" value="BAE21268.1"/>
    <property type="molecule type" value="mRNA"/>
</dbReference>
<dbReference type="EMBL" id="M11154">
    <property type="protein sequence ID" value="AAA39791.1"/>
    <property type="molecule type" value="mRNA"/>
</dbReference>
<dbReference type="CCDS" id="CCDS36184.1"/>
<dbReference type="PIR" id="A24733">
    <property type="entry name" value="A24733"/>
</dbReference>
<dbReference type="RefSeq" id="NP_001093105.1">
    <property type="nucleotide sequence ID" value="NM_001099635.1"/>
</dbReference>
<dbReference type="RefSeq" id="XP_006532475.1">
    <property type="nucleotide sequence ID" value="XM_006532412.2"/>
</dbReference>
<dbReference type="SMR" id="P13541"/>
<dbReference type="BioGRID" id="201647">
    <property type="interactions" value="27"/>
</dbReference>
<dbReference type="FunCoup" id="P13541">
    <property type="interactions" value="180"/>
</dbReference>
<dbReference type="IntAct" id="P13541">
    <property type="interactions" value="14"/>
</dbReference>
<dbReference type="STRING" id="10090.ENSMUSP00000104329"/>
<dbReference type="GlyGen" id="P13541">
    <property type="glycosylation" value="2 sites, 1 N-linked glycan (1 site), 1 O-linked glycan (1 site)"/>
</dbReference>
<dbReference type="iPTMnet" id="P13541"/>
<dbReference type="PhosphoSitePlus" id="P13541"/>
<dbReference type="jPOST" id="P13541"/>
<dbReference type="PaxDb" id="10090-ENSMUSP00000104329"/>
<dbReference type="PeptideAtlas" id="P13541"/>
<dbReference type="ProteomicsDB" id="287528"/>
<dbReference type="Antibodypedia" id="12917">
    <property type="antibodies" value="107 antibodies from 29 providers"/>
</dbReference>
<dbReference type="Ensembl" id="ENSMUST00000108689.8">
    <property type="protein sequence ID" value="ENSMUSP00000104329.2"/>
    <property type="gene ID" value="ENSMUSG00000020908.16"/>
</dbReference>
<dbReference type="GeneID" id="17883"/>
<dbReference type="KEGG" id="mmu:17883"/>
<dbReference type="UCSC" id="uc007jlx.1">
    <property type="organism name" value="mouse"/>
</dbReference>
<dbReference type="AGR" id="MGI:1339709"/>
<dbReference type="CTD" id="4621"/>
<dbReference type="MGI" id="MGI:1339709">
    <property type="gene designation" value="Myh3"/>
</dbReference>
<dbReference type="VEuPathDB" id="HostDB:ENSMUSG00000020908"/>
<dbReference type="eggNOG" id="KOG0161">
    <property type="taxonomic scope" value="Eukaryota"/>
</dbReference>
<dbReference type="GeneTree" id="ENSGT00940000161575"/>
<dbReference type="HOGENOM" id="CLU_000192_8_0_1"/>
<dbReference type="InParanoid" id="P13541"/>
<dbReference type="OMA" id="RMVIHES"/>
<dbReference type="OrthoDB" id="312459at2759"/>
<dbReference type="PhylomeDB" id="P13541"/>
<dbReference type="TreeFam" id="TF314375"/>
<dbReference type="Reactome" id="R-MMU-390522">
    <property type="pathway name" value="Striated Muscle Contraction"/>
</dbReference>
<dbReference type="BioGRID-ORCS" id="17883">
    <property type="hits" value="6 hits in 77 CRISPR screens"/>
</dbReference>
<dbReference type="PRO" id="PR:P13541"/>
<dbReference type="Proteomes" id="UP000000589">
    <property type="component" value="Chromosome 11"/>
</dbReference>
<dbReference type="RNAct" id="P13541">
    <property type="molecule type" value="protein"/>
</dbReference>
<dbReference type="Bgee" id="ENSMUSG00000020908">
    <property type="expression patterns" value="Expressed in extra-ocular muscle and 70 other cell types or tissues"/>
</dbReference>
<dbReference type="GO" id="GO:0043292">
    <property type="term" value="C:contractile muscle fiber"/>
    <property type="evidence" value="ECO:0000314"/>
    <property type="project" value="MGI"/>
</dbReference>
<dbReference type="GO" id="GO:0030016">
    <property type="term" value="C:myofibril"/>
    <property type="evidence" value="ECO:0007669"/>
    <property type="project" value="UniProtKB-SubCell"/>
</dbReference>
<dbReference type="GO" id="GO:0016459">
    <property type="term" value="C:myosin complex"/>
    <property type="evidence" value="ECO:0000314"/>
    <property type="project" value="MGI"/>
</dbReference>
<dbReference type="GO" id="GO:0032982">
    <property type="term" value="C:myosin filament"/>
    <property type="evidence" value="ECO:0007669"/>
    <property type="project" value="UniProtKB-KW"/>
</dbReference>
<dbReference type="GO" id="GO:0051015">
    <property type="term" value="F:actin filament binding"/>
    <property type="evidence" value="ECO:0007669"/>
    <property type="project" value="Ensembl"/>
</dbReference>
<dbReference type="GO" id="GO:0005524">
    <property type="term" value="F:ATP binding"/>
    <property type="evidence" value="ECO:0007669"/>
    <property type="project" value="UniProtKB-KW"/>
</dbReference>
<dbReference type="GO" id="GO:0016887">
    <property type="term" value="F:ATP hydrolysis activity"/>
    <property type="evidence" value="ECO:0007669"/>
    <property type="project" value="Ensembl"/>
</dbReference>
<dbReference type="GO" id="GO:0005516">
    <property type="term" value="F:calmodulin binding"/>
    <property type="evidence" value="ECO:0007669"/>
    <property type="project" value="UniProtKB-KW"/>
</dbReference>
<dbReference type="GO" id="GO:0000146">
    <property type="term" value="F:microfilament motor activity"/>
    <property type="evidence" value="ECO:0007669"/>
    <property type="project" value="Ensembl"/>
</dbReference>
<dbReference type="GO" id="GO:0046034">
    <property type="term" value="P:ATP metabolic process"/>
    <property type="evidence" value="ECO:0007669"/>
    <property type="project" value="Ensembl"/>
</dbReference>
<dbReference type="GO" id="GO:0003009">
    <property type="term" value="P:skeletal muscle contraction"/>
    <property type="evidence" value="ECO:0007669"/>
    <property type="project" value="Ensembl"/>
</dbReference>
<dbReference type="CDD" id="cd14913">
    <property type="entry name" value="MYSc_Myh3"/>
    <property type="match status" value="1"/>
</dbReference>
<dbReference type="FunFam" id="1.10.10.820:FF:000001">
    <property type="entry name" value="Myosin heavy chain"/>
    <property type="match status" value="1"/>
</dbReference>
<dbReference type="FunFam" id="1.20.5.340:FF:000002">
    <property type="entry name" value="Myosin heavy chain"/>
    <property type="match status" value="1"/>
</dbReference>
<dbReference type="FunFam" id="1.20.5.340:FF:000003">
    <property type="entry name" value="Myosin heavy chain"/>
    <property type="match status" value="1"/>
</dbReference>
<dbReference type="FunFam" id="1.20.5.340:FF:000004">
    <property type="entry name" value="Myosin heavy chain"/>
    <property type="match status" value="1"/>
</dbReference>
<dbReference type="FunFam" id="1.20.5.340:FF:000006">
    <property type="entry name" value="Myosin heavy chain"/>
    <property type="match status" value="1"/>
</dbReference>
<dbReference type="FunFam" id="1.20.5.340:FF:000013">
    <property type="entry name" value="Myosin heavy chain"/>
    <property type="match status" value="1"/>
</dbReference>
<dbReference type="FunFam" id="1.20.5.370:FF:000001">
    <property type="entry name" value="Myosin heavy chain"/>
    <property type="match status" value="1"/>
</dbReference>
<dbReference type="FunFam" id="1.20.5.370:FF:000002">
    <property type="entry name" value="Myosin heavy chain"/>
    <property type="match status" value="1"/>
</dbReference>
<dbReference type="FunFam" id="1.20.5.370:FF:000003">
    <property type="entry name" value="Myosin heavy chain"/>
    <property type="match status" value="1"/>
</dbReference>
<dbReference type="FunFam" id="1.20.5.370:FF:000007">
    <property type="entry name" value="Myosin heavy chain"/>
    <property type="match status" value="1"/>
</dbReference>
<dbReference type="FunFam" id="1.20.5.370:FF:000008">
    <property type="entry name" value="Myosin heavy chain"/>
    <property type="match status" value="1"/>
</dbReference>
<dbReference type="FunFam" id="1.20.5.4820:FF:000001">
    <property type="entry name" value="Myosin heavy chain"/>
    <property type="match status" value="1"/>
</dbReference>
<dbReference type="FunFam" id="1.20.58.530:FF:000001">
    <property type="entry name" value="Myosin heavy chain"/>
    <property type="match status" value="1"/>
</dbReference>
<dbReference type="FunFam" id="2.30.30.360:FF:000001">
    <property type="entry name" value="Myosin heavy chain"/>
    <property type="match status" value="1"/>
</dbReference>
<dbReference type="FunFam" id="3.40.850.10:FF:000024">
    <property type="entry name" value="Myosin heavy chain, isoform J"/>
    <property type="match status" value="1"/>
</dbReference>
<dbReference type="FunFam" id="1.20.120.720:FF:000001">
    <property type="entry name" value="Myosin heavy chain, muscle"/>
    <property type="match status" value="1"/>
</dbReference>
<dbReference type="Gene3D" id="1.10.10.820">
    <property type="match status" value="1"/>
</dbReference>
<dbReference type="Gene3D" id="1.20.5.340">
    <property type="match status" value="5"/>
</dbReference>
<dbReference type="Gene3D" id="1.20.5.370">
    <property type="match status" value="4"/>
</dbReference>
<dbReference type="Gene3D" id="1.20.5.4820">
    <property type="match status" value="1"/>
</dbReference>
<dbReference type="Gene3D" id="1.20.58.530">
    <property type="match status" value="1"/>
</dbReference>
<dbReference type="Gene3D" id="6.10.250.2420">
    <property type="match status" value="1"/>
</dbReference>
<dbReference type="Gene3D" id="3.40.850.10">
    <property type="entry name" value="Kinesin motor domain"/>
    <property type="match status" value="1"/>
</dbReference>
<dbReference type="Gene3D" id="2.30.30.360">
    <property type="entry name" value="Myosin S1 fragment, N-terminal"/>
    <property type="match status" value="1"/>
</dbReference>
<dbReference type="Gene3D" id="1.20.120.720">
    <property type="entry name" value="Myosin VI head, motor domain, U50 subdomain"/>
    <property type="match status" value="1"/>
</dbReference>
<dbReference type="InterPro" id="IPR000048">
    <property type="entry name" value="IQ_motif_EF-hand-BS"/>
</dbReference>
<dbReference type="InterPro" id="IPR036961">
    <property type="entry name" value="Kinesin_motor_dom_sf"/>
</dbReference>
<dbReference type="InterPro" id="IPR001609">
    <property type="entry name" value="Myosin_head_motor_dom-like"/>
</dbReference>
<dbReference type="InterPro" id="IPR004009">
    <property type="entry name" value="Myosin_N"/>
</dbReference>
<dbReference type="InterPro" id="IPR008989">
    <property type="entry name" value="Myosin_S1_N"/>
</dbReference>
<dbReference type="InterPro" id="IPR002928">
    <property type="entry name" value="Myosin_tail"/>
</dbReference>
<dbReference type="InterPro" id="IPR036000">
    <property type="entry name" value="MYSc_Myh3"/>
</dbReference>
<dbReference type="InterPro" id="IPR027417">
    <property type="entry name" value="P-loop_NTPase"/>
</dbReference>
<dbReference type="InterPro" id="IPR014751">
    <property type="entry name" value="XRCC4-like_C"/>
</dbReference>
<dbReference type="PANTHER" id="PTHR45615">
    <property type="entry name" value="MYOSIN HEAVY CHAIN, NON-MUSCLE"/>
    <property type="match status" value="1"/>
</dbReference>
<dbReference type="PANTHER" id="PTHR45615:SF6">
    <property type="entry name" value="MYOSIN-3"/>
    <property type="match status" value="1"/>
</dbReference>
<dbReference type="Pfam" id="PF00063">
    <property type="entry name" value="Myosin_head"/>
    <property type="match status" value="1"/>
</dbReference>
<dbReference type="Pfam" id="PF02736">
    <property type="entry name" value="Myosin_N"/>
    <property type="match status" value="1"/>
</dbReference>
<dbReference type="Pfam" id="PF01576">
    <property type="entry name" value="Myosin_tail_1"/>
    <property type="match status" value="1"/>
</dbReference>
<dbReference type="PRINTS" id="PR00193">
    <property type="entry name" value="MYOSINHEAVY"/>
</dbReference>
<dbReference type="SMART" id="SM00015">
    <property type="entry name" value="IQ"/>
    <property type="match status" value="2"/>
</dbReference>
<dbReference type="SMART" id="SM00242">
    <property type="entry name" value="MYSc"/>
    <property type="match status" value="1"/>
</dbReference>
<dbReference type="SUPFAM" id="SSF90257">
    <property type="entry name" value="Myosin rod fragments"/>
    <property type="match status" value="4"/>
</dbReference>
<dbReference type="SUPFAM" id="SSF52540">
    <property type="entry name" value="P-loop containing nucleoside triphosphate hydrolases"/>
    <property type="match status" value="1"/>
</dbReference>
<dbReference type="SUPFAM" id="SSF57997">
    <property type="entry name" value="Tropomyosin"/>
    <property type="match status" value="1"/>
</dbReference>
<dbReference type="PROSITE" id="PS50096">
    <property type="entry name" value="IQ"/>
    <property type="match status" value="1"/>
</dbReference>
<dbReference type="PROSITE" id="PS51456">
    <property type="entry name" value="MYOSIN_MOTOR"/>
    <property type="match status" value="1"/>
</dbReference>
<dbReference type="PROSITE" id="PS51844">
    <property type="entry name" value="SH3_LIKE"/>
    <property type="match status" value="1"/>
</dbReference>
<feature type="chain" id="PRO_0000123395" description="Myosin-3">
    <location>
        <begin position="1"/>
        <end position="1940"/>
    </location>
</feature>
<feature type="domain" description="Myosin N-terminal SH3-like" evidence="5">
    <location>
        <begin position="33"/>
        <end position="82"/>
    </location>
</feature>
<feature type="domain" description="Myosin motor" evidence="4">
    <location>
        <begin position="86"/>
        <end position="779"/>
    </location>
</feature>
<feature type="domain" description="IQ" evidence="3">
    <location>
        <begin position="782"/>
        <end position="811"/>
    </location>
</feature>
<feature type="region of interest" description="Actin-binding" evidence="1">
    <location>
        <begin position="656"/>
        <end position="678"/>
    </location>
</feature>
<feature type="region of interest" description="Actin-binding" evidence="1">
    <location>
        <begin position="758"/>
        <end position="772"/>
    </location>
</feature>
<feature type="region of interest" description="Disordered" evidence="6">
    <location>
        <begin position="1260"/>
        <end position="1289"/>
    </location>
</feature>
<feature type="coiled-coil region" evidence="2">
    <location>
        <begin position="841"/>
        <end position="1928"/>
    </location>
</feature>
<feature type="compositionally biased region" description="Polar residues" evidence="6">
    <location>
        <begin position="1269"/>
        <end position="1282"/>
    </location>
</feature>
<feature type="binding site" evidence="2">
    <location>
        <begin position="179"/>
        <end position="186"/>
    </location>
    <ligand>
        <name>ATP</name>
        <dbReference type="ChEBI" id="CHEBI:30616"/>
    </ligand>
</feature>
<feature type="modified residue" description="N6,N6,N6-trimethyllysine" evidence="2">
    <location>
        <position position="130"/>
    </location>
</feature>
<feature type="sequence conflict" description="In Ref. 3; AAA39791." evidence="7" ref="3">
    <original>R</original>
    <variation>Q</variation>
    <location>
        <position position="1747"/>
    </location>
</feature>
<feature type="sequence conflict" description="In Ref. 3; AAA39791." evidence="7" ref="3">
    <original>D</original>
    <variation>A</variation>
    <location>
        <position position="1858"/>
    </location>
</feature>
<protein>
    <recommendedName>
        <fullName>Myosin-3</fullName>
    </recommendedName>
    <alternativeName>
        <fullName>Myosin heavy chain 3</fullName>
    </alternativeName>
</protein>
<reference key="1">
    <citation type="journal article" date="2009" name="PLoS Biol.">
        <title>Lineage-specific biology revealed by a finished genome assembly of the mouse.</title>
        <authorList>
            <person name="Church D.M."/>
            <person name="Goodstadt L."/>
            <person name="Hillier L.W."/>
            <person name="Zody M.C."/>
            <person name="Goldstein S."/>
            <person name="She X."/>
            <person name="Bult C.J."/>
            <person name="Agarwala R."/>
            <person name="Cherry J.L."/>
            <person name="DiCuccio M."/>
            <person name="Hlavina W."/>
            <person name="Kapustin Y."/>
            <person name="Meric P."/>
            <person name="Maglott D."/>
            <person name="Birtle Z."/>
            <person name="Marques A.C."/>
            <person name="Graves T."/>
            <person name="Zhou S."/>
            <person name="Teague B."/>
            <person name="Potamousis K."/>
            <person name="Churas C."/>
            <person name="Place M."/>
            <person name="Herschleb J."/>
            <person name="Runnheim R."/>
            <person name="Forrest D."/>
            <person name="Amos-Landgraf J."/>
            <person name="Schwartz D.C."/>
            <person name="Cheng Z."/>
            <person name="Lindblad-Toh K."/>
            <person name="Eichler E.E."/>
            <person name="Ponting C.P."/>
        </authorList>
    </citation>
    <scope>NUCLEOTIDE SEQUENCE [LARGE SCALE GENOMIC DNA]</scope>
    <source>
        <strain>C57BL/6J</strain>
    </source>
</reference>
<reference key="2">
    <citation type="journal article" date="2005" name="Science">
        <title>The transcriptional landscape of the mammalian genome.</title>
        <authorList>
            <person name="Carninci P."/>
            <person name="Kasukawa T."/>
            <person name="Katayama S."/>
            <person name="Gough J."/>
            <person name="Frith M.C."/>
            <person name="Maeda N."/>
            <person name="Oyama R."/>
            <person name="Ravasi T."/>
            <person name="Lenhard B."/>
            <person name="Wells C."/>
            <person name="Kodzius R."/>
            <person name="Shimokawa K."/>
            <person name="Bajic V.B."/>
            <person name="Brenner S.E."/>
            <person name="Batalov S."/>
            <person name="Forrest A.R."/>
            <person name="Zavolan M."/>
            <person name="Davis M.J."/>
            <person name="Wilming L.G."/>
            <person name="Aidinis V."/>
            <person name="Allen J.E."/>
            <person name="Ambesi-Impiombato A."/>
            <person name="Apweiler R."/>
            <person name="Aturaliya R.N."/>
            <person name="Bailey T.L."/>
            <person name="Bansal M."/>
            <person name="Baxter L."/>
            <person name="Beisel K.W."/>
            <person name="Bersano T."/>
            <person name="Bono H."/>
            <person name="Chalk A.M."/>
            <person name="Chiu K.P."/>
            <person name="Choudhary V."/>
            <person name="Christoffels A."/>
            <person name="Clutterbuck D.R."/>
            <person name="Crowe M.L."/>
            <person name="Dalla E."/>
            <person name="Dalrymple B.P."/>
            <person name="de Bono B."/>
            <person name="Della Gatta G."/>
            <person name="di Bernardo D."/>
            <person name="Down T."/>
            <person name="Engstrom P."/>
            <person name="Fagiolini M."/>
            <person name="Faulkner G."/>
            <person name="Fletcher C.F."/>
            <person name="Fukushima T."/>
            <person name="Furuno M."/>
            <person name="Futaki S."/>
            <person name="Gariboldi M."/>
            <person name="Georgii-Hemming P."/>
            <person name="Gingeras T.R."/>
            <person name="Gojobori T."/>
            <person name="Green R.E."/>
            <person name="Gustincich S."/>
            <person name="Harbers M."/>
            <person name="Hayashi Y."/>
            <person name="Hensch T.K."/>
            <person name="Hirokawa N."/>
            <person name="Hill D."/>
            <person name="Huminiecki L."/>
            <person name="Iacono M."/>
            <person name="Ikeo K."/>
            <person name="Iwama A."/>
            <person name="Ishikawa T."/>
            <person name="Jakt M."/>
            <person name="Kanapin A."/>
            <person name="Katoh M."/>
            <person name="Kawasawa Y."/>
            <person name="Kelso J."/>
            <person name="Kitamura H."/>
            <person name="Kitano H."/>
            <person name="Kollias G."/>
            <person name="Krishnan S.P."/>
            <person name="Kruger A."/>
            <person name="Kummerfeld S.K."/>
            <person name="Kurochkin I.V."/>
            <person name="Lareau L.F."/>
            <person name="Lazarevic D."/>
            <person name="Lipovich L."/>
            <person name="Liu J."/>
            <person name="Liuni S."/>
            <person name="McWilliam S."/>
            <person name="Madan Babu M."/>
            <person name="Madera M."/>
            <person name="Marchionni L."/>
            <person name="Matsuda H."/>
            <person name="Matsuzawa S."/>
            <person name="Miki H."/>
            <person name="Mignone F."/>
            <person name="Miyake S."/>
            <person name="Morris K."/>
            <person name="Mottagui-Tabar S."/>
            <person name="Mulder N."/>
            <person name="Nakano N."/>
            <person name="Nakauchi H."/>
            <person name="Ng P."/>
            <person name="Nilsson R."/>
            <person name="Nishiguchi S."/>
            <person name="Nishikawa S."/>
            <person name="Nori F."/>
            <person name="Ohara O."/>
            <person name="Okazaki Y."/>
            <person name="Orlando V."/>
            <person name="Pang K.C."/>
            <person name="Pavan W.J."/>
            <person name="Pavesi G."/>
            <person name="Pesole G."/>
            <person name="Petrovsky N."/>
            <person name="Piazza S."/>
            <person name="Reed J."/>
            <person name="Reid J.F."/>
            <person name="Ring B.Z."/>
            <person name="Ringwald M."/>
            <person name="Rost B."/>
            <person name="Ruan Y."/>
            <person name="Salzberg S.L."/>
            <person name="Sandelin A."/>
            <person name="Schneider C."/>
            <person name="Schoenbach C."/>
            <person name="Sekiguchi K."/>
            <person name="Semple C.A."/>
            <person name="Seno S."/>
            <person name="Sessa L."/>
            <person name="Sheng Y."/>
            <person name="Shibata Y."/>
            <person name="Shimada H."/>
            <person name="Shimada K."/>
            <person name="Silva D."/>
            <person name="Sinclair B."/>
            <person name="Sperling S."/>
            <person name="Stupka E."/>
            <person name="Sugiura K."/>
            <person name="Sultana R."/>
            <person name="Takenaka Y."/>
            <person name="Taki K."/>
            <person name="Tammoja K."/>
            <person name="Tan S.L."/>
            <person name="Tang S."/>
            <person name="Taylor M.S."/>
            <person name="Tegner J."/>
            <person name="Teichmann S.A."/>
            <person name="Ueda H.R."/>
            <person name="van Nimwegen E."/>
            <person name="Verardo R."/>
            <person name="Wei C.L."/>
            <person name="Yagi K."/>
            <person name="Yamanishi H."/>
            <person name="Zabarovsky E."/>
            <person name="Zhu S."/>
            <person name="Zimmer A."/>
            <person name="Hide W."/>
            <person name="Bult C."/>
            <person name="Grimmond S.M."/>
            <person name="Teasdale R.D."/>
            <person name="Liu E.T."/>
            <person name="Brusic V."/>
            <person name="Quackenbush J."/>
            <person name="Wahlestedt C."/>
            <person name="Mattick J.S."/>
            <person name="Hume D.A."/>
            <person name="Kai C."/>
            <person name="Sasaki D."/>
            <person name="Tomaru Y."/>
            <person name="Fukuda S."/>
            <person name="Kanamori-Katayama M."/>
            <person name="Suzuki M."/>
            <person name="Aoki J."/>
            <person name="Arakawa T."/>
            <person name="Iida J."/>
            <person name="Imamura K."/>
            <person name="Itoh M."/>
            <person name="Kato T."/>
            <person name="Kawaji H."/>
            <person name="Kawagashira N."/>
            <person name="Kawashima T."/>
            <person name="Kojima M."/>
            <person name="Kondo S."/>
            <person name="Konno H."/>
            <person name="Nakano K."/>
            <person name="Ninomiya N."/>
            <person name="Nishio T."/>
            <person name="Okada M."/>
            <person name="Plessy C."/>
            <person name="Shibata K."/>
            <person name="Shiraki T."/>
            <person name="Suzuki S."/>
            <person name="Tagami M."/>
            <person name="Waki K."/>
            <person name="Watahiki A."/>
            <person name="Okamura-Oho Y."/>
            <person name="Suzuki H."/>
            <person name="Kawai J."/>
            <person name="Hayashizaki Y."/>
        </authorList>
    </citation>
    <scope>NUCLEOTIDE SEQUENCE [LARGE SCALE MRNA] OF 523-1292</scope>
    <source>
        <strain>C57BL/6J</strain>
        <tissue>Head</tissue>
    </source>
</reference>
<reference key="3">
    <citation type="journal article" date="1985" name="Proc. Natl. Acad. Sci. U.S.A.">
        <title>Genes for skeletal muscle myosin heavy chains are clustered and are not located on the same mouse chromosome as a cardiac myosin heavy chain gene.</title>
        <authorList>
            <person name="Weydert A."/>
            <person name="Daubas P."/>
            <person name="Lazaridis I."/>
            <person name="Barton P."/>
            <person name="Garner I."/>
            <person name="Leader D.P."/>
            <person name="Bonhomme F."/>
            <person name="Catalan J."/>
            <person name="Simon D."/>
            <person name="Guenet J.-L."/>
            <person name="Gros F."/>
            <person name="Buckingham M.E."/>
        </authorList>
    </citation>
    <scope>NUCLEOTIDE SEQUENCE [MRNA] OF 1747-1905</scope>
</reference>
<keyword id="KW-0009">Actin-binding</keyword>
<keyword id="KW-0067">ATP-binding</keyword>
<keyword id="KW-0112">Calmodulin-binding</keyword>
<keyword id="KW-0175">Coiled coil</keyword>
<keyword id="KW-0963">Cytoplasm</keyword>
<keyword id="KW-0488">Methylation</keyword>
<keyword id="KW-0505">Motor protein</keyword>
<keyword id="KW-0514">Muscle protein</keyword>
<keyword id="KW-0518">Myosin</keyword>
<keyword id="KW-0547">Nucleotide-binding</keyword>
<keyword id="KW-1185">Reference proteome</keyword>
<keyword id="KW-0787">Thick filament</keyword>
<proteinExistence type="evidence at transcript level"/>
<organism>
    <name type="scientific">Mus musculus</name>
    <name type="common">Mouse</name>
    <dbReference type="NCBI Taxonomy" id="10090"/>
    <lineage>
        <taxon>Eukaryota</taxon>
        <taxon>Metazoa</taxon>
        <taxon>Chordata</taxon>
        <taxon>Craniata</taxon>
        <taxon>Vertebrata</taxon>
        <taxon>Euteleostomi</taxon>
        <taxon>Mammalia</taxon>
        <taxon>Eutheria</taxon>
        <taxon>Euarchontoglires</taxon>
        <taxon>Glires</taxon>
        <taxon>Rodentia</taxon>
        <taxon>Myomorpha</taxon>
        <taxon>Muroidea</taxon>
        <taxon>Muridae</taxon>
        <taxon>Murinae</taxon>
        <taxon>Mus</taxon>
        <taxon>Mus</taxon>
    </lineage>
</organism>
<name>MYH3_MOUSE</name>
<gene>
    <name type="primary">Myh3</name>
    <name type="synonym">Myhse</name>
</gene>
<evidence type="ECO:0000250" key="1"/>
<evidence type="ECO:0000255" key="2"/>
<evidence type="ECO:0000255" key="3">
    <source>
        <dbReference type="PROSITE-ProRule" id="PRU00116"/>
    </source>
</evidence>
<evidence type="ECO:0000255" key="4">
    <source>
        <dbReference type="PROSITE-ProRule" id="PRU00782"/>
    </source>
</evidence>
<evidence type="ECO:0000255" key="5">
    <source>
        <dbReference type="PROSITE-ProRule" id="PRU01190"/>
    </source>
</evidence>
<evidence type="ECO:0000256" key="6">
    <source>
        <dbReference type="SAM" id="MobiDB-lite"/>
    </source>
</evidence>
<evidence type="ECO:0000305" key="7"/>